<protein>
    <recommendedName>
        <fullName>Sulfite reductase, dissimilatory-type subunit alpha</fullName>
        <ecNumber evidence="1">1.8.1.22</ecNumber>
    </recommendedName>
    <alternativeName>
        <fullName>Dissimilatory sulfite reductase subunit alpha</fullName>
    </alternativeName>
    <alternativeName>
        <fullName>Hydrogensulfite reductase subunit alpha</fullName>
    </alternativeName>
</protein>
<keyword id="KW-0004">4Fe-4S</keyword>
<keyword id="KW-0349">Heme</keyword>
<keyword id="KW-0408">Iron</keyword>
<keyword id="KW-0411">Iron-sulfur</keyword>
<keyword id="KW-0479">Metal-binding</keyword>
<keyword id="KW-0560">Oxidoreductase</keyword>
<keyword id="KW-1185">Reference proteome</keyword>
<reference key="1">
    <citation type="journal article" date="1997" name="Microbiology">
        <title>Towards the phylogeny of APS reductases and sirohaem sulfite reductases in sulfate-reducing and sulfur-oxidizing prokaryotes.</title>
        <authorList>
            <person name="Hipp W.M."/>
            <person name="Pott A.S."/>
            <person name="Thum-Schmitz N."/>
            <person name="Faath I."/>
            <person name="Dahl C."/>
            <person name="Trueper H.G."/>
        </authorList>
    </citation>
    <scope>NUCLEOTIDE SEQUENCE [GENOMIC DNA]</scope>
</reference>
<reference key="2">
    <citation type="journal article" date="2011" name="Stand. Genomic Sci.">
        <title>Complete genome sequence of Allochromatium vinosum DSM 180(T).</title>
        <authorList>
            <person name="Weissgerber T."/>
            <person name="Zigann R."/>
            <person name="Bruce D."/>
            <person name="Chang Y.J."/>
            <person name="Detter J.C."/>
            <person name="Han C."/>
            <person name="Hauser L."/>
            <person name="Jeffries C.D."/>
            <person name="Land M."/>
            <person name="Munk A.C."/>
            <person name="Tapia R."/>
            <person name="Dahl C."/>
        </authorList>
    </citation>
    <scope>NUCLEOTIDE SEQUENCE [LARGE SCALE GENOMIC DNA]</scope>
    <source>
        <strain>ATCC 17899 / DSM 180 / NBRC 103801 / NCIMB 10441 / D</strain>
    </source>
</reference>
<proteinExistence type="inferred from homology"/>
<sequence length="417" mass="46791">MAIDKHATPMLDQLETGPWPSFISGIKRLRDQHPDARINAVTNDLLGQLEHSYETRKGYWKGGTVSVFGYGGGIIPRFSEVGKVFPSSKEFHTVRVQPPAGNHYTTAMLRQLADTWEKYGSGLITFHGQTGNIMFIGVDTPNTQNFFDEINDYGWDLGGAGPCVRTAMSCVGSARCEMSCTNELKAHRLLVNNFTDDVHRPALPYKFKFKVSGCPNDCQNAIERSDFAVLGTWRDDMKVDQAEVKHYIADKGRQYYIDNVITRCPTKALSLNDDDTLDVNNRDCVRCMHCLNVMPKALHPGDDKGVTILIGGKRTLKIGDLMGTVVVPFKKLETEEDYESLVELAETIIDFWAENGLEHERCGEMIERIGLANFLEGIGIEPDPNMLSHPRQSSYIRMDGWDEAAEEWFARQAEAGR</sequence>
<evidence type="ECO:0000250" key="1">
    <source>
        <dbReference type="UniProtKB" id="Q59109"/>
    </source>
</evidence>
<organism>
    <name type="scientific">Allochromatium vinosum (strain ATCC 17899 / DSM 180 / NBRC 103801 / NCIMB 10441 / D)</name>
    <name type="common">Chromatium vinosum</name>
    <dbReference type="NCBI Taxonomy" id="572477"/>
    <lineage>
        <taxon>Bacteria</taxon>
        <taxon>Pseudomonadati</taxon>
        <taxon>Pseudomonadota</taxon>
        <taxon>Gammaproteobacteria</taxon>
        <taxon>Chromatiales</taxon>
        <taxon>Chromatiaceae</taxon>
        <taxon>Allochromatium</taxon>
    </lineage>
</organism>
<gene>
    <name type="primary">dsrA</name>
    <name type="ordered locus">Alvin_1251</name>
</gene>
<feature type="chain" id="PRO_0000080026" description="Sulfite reductase, dissimilatory-type subunit alpha">
    <location>
        <begin position="1"/>
        <end position="417"/>
    </location>
</feature>
<feature type="binding site" evidence="1">
    <location>
        <position position="170"/>
    </location>
    <ligand>
        <name>[4Fe-4S] cluster</name>
        <dbReference type="ChEBI" id="CHEBI:49883"/>
        <label>1</label>
    </ligand>
</feature>
<feature type="binding site" evidence="1">
    <location>
        <position position="176"/>
    </location>
    <ligand>
        <name>[4Fe-4S] cluster</name>
        <dbReference type="ChEBI" id="CHEBI:49883"/>
        <label>1</label>
    </ligand>
</feature>
<feature type="binding site" evidence="1">
    <location>
        <position position="214"/>
    </location>
    <ligand>
        <name>[4Fe-4S] cluster</name>
        <dbReference type="ChEBI" id="CHEBI:49883"/>
        <label>1</label>
    </ligand>
</feature>
<feature type="binding site" evidence="1">
    <location>
        <position position="218"/>
    </location>
    <ligand>
        <name>[4Fe-4S] cluster</name>
        <dbReference type="ChEBI" id="CHEBI:49883"/>
        <label>1</label>
    </ligand>
</feature>
<feature type="binding site" description="axial binding residue" evidence="1">
    <location>
        <position position="218"/>
    </location>
    <ligand>
        <name>siroheme</name>
        <dbReference type="ChEBI" id="CHEBI:60052"/>
    </ligand>
    <ligandPart>
        <name>Fe</name>
        <dbReference type="ChEBI" id="CHEBI:18248"/>
    </ligandPart>
</feature>
<feature type="binding site" evidence="1">
    <location>
        <position position="264"/>
    </location>
    <ligand>
        <name>[4Fe-4S] cluster</name>
        <dbReference type="ChEBI" id="CHEBI:49883"/>
        <label>2</label>
    </ligand>
</feature>
<feature type="binding site" evidence="1">
    <location>
        <position position="284"/>
    </location>
    <ligand>
        <name>[4Fe-4S] cluster</name>
        <dbReference type="ChEBI" id="CHEBI:49883"/>
        <label>2</label>
    </ligand>
</feature>
<feature type="binding site" evidence="1">
    <location>
        <position position="287"/>
    </location>
    <ligand>
        <name>[4Fe-4S] cluster</name>
        <dbReference type="ChEBI" id="CHEBI:49883"/>
        <label>2</label>
    </ligand>
</feature>
<feature type="binding site" evidence="1">
    <location>
        <position position="290"/>
    </location>
    <ligand>
        <name>[4Fe-4S] cluster</name>
        <dbReference type="ChEBI" id="CHEBI:49883"/>
        <label>2</label>
    </ligand>
</feature>
<dbReference type="EC" id="1.8.1.22" evidence="1"/>
<dbReference type="EMBL" id="U84760">
    <property type="protein sequence ID" value="AAC35394.1"/>
    <property type="molecule type" value="Genomic_DNA"/>
</dbReference>
<dbReference type="EMBL" id="CP001896">
    <property type="protein sequence ID" value="ADC62190.1"/>
    <property type="molecule type" value="Genomic_DNA"/>
</dbReference>
<dbReference type="RefSeq" id="WP_012970464.1">
    <property type="nucleotide sequence ID" value="NC_013851.1"/>
</dbReference>
<dbReference type="SMR" id="O33998"/>
<dbReference type="STRING" id="572477.Alvin_1251"/>
<dbReference type="KEGG" id="alv:Alvin_1251"/>
<dbReference type="eggNOG" id="COG2221">
    <property type="taxonomic scope" value="Bacteria"/>
</dbReference>
<dbReference type="HOGENOM" id="CLU_660112_0_0_6"/>
<dbReference type="OrthoDB" id="9800558at2"/>
<dbReference type="BioCyc" id="MetaCyc:MONOMER-12320"/>
<dbReference type="BRENDA" id="1.8.99.5">
    <property type="organism ID" value="257"/>
</dbReference>
<dbReference type="Proteomes" id="UP000001441">
    <property type="component" value="Chromosome"/>
</dbReference>
<dbReference type="GO" id="GO:0051539">
    <property type="term" value="F:4 iron, 4 sulfur cluster binding"/>
    <property type="evidence" value="ECO:0007669"/>
    <property type="project" value="UniProtKB-KW"/>
</dbReference>
<dbReference type="GO" id="GO:0018551">
    <property type="term" value="F:dissimilatory sulfite reductase (NADH) activity"/>
    <property type="evidence" value="ECO:0007669"/>
    <property type="project" value="InterPro"/>
</dbReference>
<dbReference type="GO" id="GO:0020037">
    <property type="term" value="F:heme binding"/>
    <property type="evidence" value="ECO:0007669"/>
    <property type="project" value="InterPro"/>
</dbReference>
<dbReference type="GO" id="GO:0046872">
    <property type="term" value="F:metal ion binding"/>
    <property type="evidence" value="ECO:0007669"/>
    <property type="project" value="UniProtKB-KW"/>
</dbReference>
<dbReference type="Gene3D" id="3.30.70.20">
    <property type="match status" value="1"/>
</dbReference>
<dbReference type="Gene3D" id="3.30.70.2500">
    <property type="match status" value="1"/>
</dbReference>
<dbReference type="Gene3D" id="6.10.140.1420">
    <property type="match status" value="1"/>
</dbReference>
<dbReference type="Gene3D" id="3.30.413.10">
    <property type="entry name" value="Sulfite Reductase Hemoprotein, domain 1"/>
    <property type="match status" value="1"/>
</dbReference>
<dbReference type="InterPro" id="IPR011806">
    <property type="entry name" value="DsrA"/>
</dbReference>
<dbReference type="InterPro" id="IPR051329">
    <property type="entry name" value="NIR_SIR_4Fe-4S"/>
</dbReference>
<dbReference type="InterPro" id="IPR005117">
    <property type="entry name" value="NiRdtase/SiRdtase_haem-b_fer"/>
</dbReference>
<dbReference type="InterPro" id="IPR036136">
    <property type="entry name" value="Nit/Sulf_reduc_fer-like_dom_sf"/>
</dbReference>
<dbReference type="InterPro" id="IPR006067">
    <property type="entry name" value="NO2/SO3_Rdtase_4Fe4S_dom"/>
</dbReference>
<dbReference type="InterPro" id="IPR045854">
    <property type="entry name" value="NO2/SO3_Rdtase_4Fe4S_sf"/>
</dbReference>
<dbReference type="NCBIfam" id="TIGR02064">
    <property type="entry name" value="dsrA"/>
    <property type="match status" value="1"/>
</dbReference>
<dbReference type="PANTHER" id="PTHR32439:SF9">
    <property type="entry name" value="BLR3264 PROTEIN"/>
    <property type="match status" value="1"/>
</dbReference>
<dbReference type="PANTHER" id="PTHR32439">
    <property type="entry name" value="FERREDOXIN--NITRITE REDUCTASE, CHLOROPLASTIC"/>
    <property type="match status" value="1"/>
</dbReference>
<dbReference type="Pfam" id="PF01077">
    <property type="entry name" value="NIR_SIR"/>
    <property type="match status" value="1"/>
</dbReference>
<dbReference type="Pfam" id="PF03460">
    <property type="entry name" value="NIR_SIR_ferr"/>
    <property type="match status" value="1"/>
</dbReference>
<dbReference type="SUPFAM" id="SSF54862">
    <property type="entry name" value="4Fe-4S ferredoxins"/>
    <property type="match status" value="1"/>
</dbReference>
<dbReference type="SUPFAM" id="SSF56014">
    <property type="entry name" value="Nitrite and sulphite reductase 4Fe-4S domain-like"/>
    <property type="match status" value="1"/>
</dbReference>
<dbReference type="SUPFAM" id="SSF55124">
    <property type="entry name" value="Nitrite/Sulfite reductase N-terminal domain-like"/>
    <property type="match status" value="1"/>
</dbReference>
<name>DSRA_ALLVD</name>
<accession>O33998</accession>
<accession>D3RSN1</accession>
<comment type="function">
    <text evidence="1">Catalyzes the reduction of sulfite to sulfide. This is the terminal oxidation reaction in sulfate respiration.</text>
</comment>
<comment type="catalytic activity">
    <reaction evidence="1">
        <text>[DsrC protein]-trisulfide + NAD(+) + 3 H2O = [DsrC protein]-dithiol + sulfite + NADH + 3 H(+)</text>
        <dbReference type="Rhea" id="RHEA:78943"/>
        <dbReference type="Rhea" id="RHEA-COMP:11723"/>
        <dbReference type="Rhea" id="RHEA-COMP:19152"/>
        <dbReference type="ChEBI" id="CHEBI:15377"/>
        <dbReference type="ChEBI" id="CHEBI:15378"/>
        <dbReference type="ChEBI" id="CHEBI:17359"/>
        <dbReference type="ChEBI" id="CHEBI:29950"/>
        <dbReference type="ChEBI" id="CHEBI:57540"/>
        <dbReference type="ChEBI" id="CHEBI:57945"/>
        <dbReference type="ChEBI" id="CHEBI:229579"/>
        <dbReference type="EC" id="1.8.1.22"/>
    </reaction>
</comment>
<comment type="cofactor">
    <cofactor evidence="1">
        <name>[4Fe-4S] cluster</name>
        <dbReference type="ChEBI" id="CHEBI:49883"/>
    </cofactor>
    <text evidence="1">Binds 2 [4Fe-4S] clusters per subunit.</text>
</comment>
<comment type="cofactor">
    <cofactor evidence="1">
        <name>siroheme</name>
        <dbReference type="ChEBI" id="CHEBI:60052"/>
    </cofactor>
    <text evidence="1">Binds 1 siroheme per subunit.</text>
</comment>